<sequence>MSGHSKWHNIQGRKNAQDAKRGKVFQKLSREIYMAAKSGGPDPSGNPTLRMVMDKARAANMPKTNIERAIKKAEGNSDEHYDEITYEGYAPGGVAVLVEALTDNKNRTASDVRVAFTRNGGSLGATGSVAYMFDRKGYIVIDRSTTDADEDQVLLDVMDAGGDDLETSDDAFEIYTDPKQFTAVRDALEKAGYKLANAELTMIPQNTTPVPADKKEQFTHLIDALEDNDDVSNVYTAAADDDE</sequence>
<keyword id="KW-0963">Cytoplasm</keyword>
<keyword id="KW-0238">DNA-binding</keyword>
<keyword id="KW-0804">Transcription</keyword>
<keyword id="KW-0805">Transcription regulation</keyword>
<reference key="1">
    <citation type="journal article" date="2006" name="Proc. Natl. Acad. Sci. U.S.A.">
        <title>Comparative genomics of the lactic acid bacteria.</title>
        <authorList>
            <person name="Makarova K.S."/>
            <person name="Slesarev A."/>
            <person name="Wolf Y.I."/>
            <person name="Sorokin A."/>
            <person name="Mirkin B."/>
            <person name="Koonin E.V."/>
            <person name="Pavlov A."/>
            <person name="Pavlova N."/>
            <person name="Karamychev V."/>
            <person name="Polouchine N."/>
            <person name="Shakhova V."/>
            <person name="Grigoriev I."/>
            <person name="Lou Y."/>
            <person name="Rohksar D."/>
            <person name="Lucas S."/>
            <person name="Huang K."/>
            <person name="Goodstein D.M."/>
            <person name="Hawkins T."/>
            <person name="Plengvidhya V."/>
            <person name="Welker D."/>
            <person name="Hughes J."/>
            <person name="Goh Y."/>
            <person name="Benson A."/>
            <person name="Baldwin K."/>
            <person name="Lee J.-H."/>
            <person name="Diaz-Muniz I."/>
            <person name="Dosti B."/>
            <person name="Smeianov V."/>
            <person name="Wechter W."/>
            <person name="Barabote R."/>
            <person name="Lorca G."/>
            <person name="Altermann E."/>
            <person name="Barrangou R."/>
            <person name="Ganesan B."/>
            <person name="Xie Y."/>
            <person name="Rawsthorne H."/>
            <person name="Tamir D."/>
            <person name="Parker C."/>
            <person name="Breidt F."/>
            <person name="Broadbent J.R."/>
            <person name="Hutkins R."/>
            <person name="O'Sullivan D."/>
            <person name="Steele J."/>
            <person name="Unlu G."/>
            <person name="Saier M.H. Jr."/>
            <person name="Klaenhammer T."/>
            <person name="Richardson P."/>
            <person name="Kozyavkin S."/>
            <person name="Weimer B.C."/>
            <person name="Mills D.A."/>
        </authorList>
    </citation>
    <scope>NUCLEOTIDE SEQUENCE [LARGE SCALE GENOMIC DNA]</scope>
    <source>
        <strain>ATCC 33323 / DSM 20243 / BCRC 14619 / CIP 102991 / JCM 1131 / KCTC 3163 / NCIMB 11718 / NCTC 13722 / AM63</strain>
    </source>
</reference>
<name>Y1276_LACGA</name>
<comment type="subcellular location">
    <subcellularLocation>
        <location evidence="1">Cytoplasm</location>
    </subcellularLocation>
</comment>
<comment type="similarity">
    <text evidence="1">Belongs to the TACO1 family.</text>
</comment>
<dbReference type="EMBL" id="CP000413">
    <property type="protein sequence ID" value="ABJ60639.1"/>
    <property type="molecule type" value="Genomic_DNA"/>
</dbReference>
<dbReference type="RefSeq" id="WP_003647041.1">
    <property type="nucleotide sequence ID" value="NZ_WBMG01000002.1"/>
</dbReference>
<dbReference type="SMR" id="Q042I3"/>
<dbReference type="GeneID" id="29638498"/>
<dbReference type="KEGG" id="lga:LGAS_1276"/>
<dbReference type="HOGENOM" id="CLU_062974_3_0_9"/>
<dbReference type="BioCyc" id="LGAS324831:G1G6Y-1271-MONOMER"/>
<dbReference type="Proteomes" id="UP000000664">
    <property type="component" value="Chromosome"/>
</dbReference>
<dbReference type="GO" id="GO:0005829">
    <property type="term" value="C:cytosol"/>
    <property type="evidence" value="ECO:0007669"/>
    <property type="project" value="TreeGrafter"/>
</dbReference>
<dbReference type="GO" id="GO:0003677">
    <property type="term" value="F:DNA binding"/>
    <property type="evidence" value="ECO:0007669"/>
    <property type="project" value="UniProtKB-UniRule"/>
</dbReference>
<dbReference type="GO" id="GO:0006355">
    <property type="term" value="P:regulation of DNA-templated transcription"/>
    <property type="evidence" value="ECO:0007669"/>
    <property type="project" value="UniProtKB-UniRule"/>
</dbReference>
<dbReference type="FunFam" id="1.10.10.200:FF:000002">
    <property type="entry name" value="Probable transcriptional regulatory protein CLM62_37755"/>
    <property type="match status" value="1"/>
</dbReference>
<dbReference type="FunFam" id="3.30.70.980:FF:000002">
    <property type="entry name" value="Probable transcriptional regulatory protein YebC"/>
    <property type="match status" value="1"/>
</dbReference>
<dbReference type="Gene3D" id="1.10.10.200">
    <property type="match status" value="1"/>
</dbReference>
<dbReference type="Gene3D" id="3.30.70.980">
    <property type="match status" value="2"/>
</dbReference>
<dbReference type="HAMAP" id="MF_00693">
    <property type="entry name" value="Transcrip_reg_TACO1"/>
    <property type="match status" value="1"/>
</dbReference>
<dbReference type="InterPro" id="IPR017856">
    <property type="entry name" value="Integrase-like_N"/>
</dbReference>
<dbReference type="InterPro" id="IPR048300">
    <property type="entry name" value="TACO1_YebC-like_2nd/3rd_dom"/>
</dbReference>
<dbReference type="InterPro" id="IPR049083">
    <property type="entry name" value="TACO1_YebC_N"/>
</dbReference>
<dbReference type="InterPro" id="IPR002876">
    <property type="entry name" value="Transcrip_reg_TACO1-like"/>
</dbReference>
<dbReference type="InterPro" id="IPR026564">
    <property type="entry name" value="Transcrip_reg_TACO1-like_dom3"/>
</dbReference>
<dbReference type="InterPro" id="IPR029072">
    <property type="entry name" value="YebC-like"/>
</dbReference>
<dbReference type="NCBIfam" id="NF001030">
    <property type="entry name" value="PRK00110.1"/>
    <property type="match status" value="1"/>
</dbReference>
<dbReference type="NCBIfam" id="NF009044">
    <property type="entry name" value="PRK12378.1"/>
    <property type="match status" value="1"/>
</dbReference>
<dbReference type="NCBIfam" id="TIGR01033">
    <property type="entry name" value="YebC/PmpR family DNA-binding transcriptional regulator"/>
    <property type="match status" value="1"/>
</dbReference>
<dbReference type="PANTHER" id="PTHR12532:SF6">
    <property type="entry name" value="TRANSCRIPTIONAL REGULATORY PROTEIN YEBC-RELATED"/>
    <property type="match status" value="1"/>
</dbReference>
<dbReference type="PANTHER" id="PTHR12532">
    <property type="entry name" value="TRANSLATIONAL ACTIVATOR OF CYTOCHROME C OXIDASE 1"/>
    <property type="match status" value="1"/>
</dbReference>
<dbReference type="Pfam" id="PF20772">
    <property type="entry name" value="TACO1_YebC_N"/>
    <property type="match status" value="1"/>
</dbReference>
<dbReference type="Pfam" id="PF01709">
    <property type="entry name" value="Transcrip_reg"/>
    <property type="match status" value="1"/>
</dbReference>
<dbReference type="SUPFAM" id="SSF75625">
    <property type="entry name" value="YebC-like"/>
    <property type="match status" value="1"/>
</dbReference>
<proteinExistence type="inferred from homology"/>
<gene>
    <name type="ordered locus">LGAS_1276</name>
</gene>
<organism>
    <name type="scientific">Lactobacillus gasseri (strain ATCC 33323 / DSM 20243 / BCRC 14619 / CIP 102991 / JCM 1131 / KCTC 3163 / NCIMB 11718 / NCTC 13722 / AM63)</name>
    <dbReference type="NCBI Taxonomy" id="324831"/>
    <lineage>
        <taxon>Bacteria</taxon>
        <taxon>Bacillati</taxon>
        <taxon>Bacillota</taxon>
        <taxon>Bacilli</taxon>
        <taxon>Lactobacillales</taxon>
        <taxon>Lactobacillaceae</taxon>
        <taxon>Lactobacillus</taxon>
    </lineage>
</organism>
<protein>
    <recommendedName>
        <fullName evidence="1">Probable transcriptional regulatory protein LGAS_1276</fullName>
    </recommendedName>
</protein>
<feature type="chain" id="PRO_1000045326" description="Probable transcriptional regulatory protein LGAS_1276">
    <location>
        <begin position="1"/>
        <end position="243"/>
    </location>
</feature>
<feature type="region of interest" description="Disordered" evidence="2">
    <location>
        <begin position="1"/>
        <end position="22"/>
    </location>
</feature>
<evidence type="ECO:0000255" key="1">
    <source>
        <dbReference type="HAMAP-Rule" id="MF_00693"/>
    </source>
</evidence>
<evidence type="ECO:0000256" key="2">
    <source>
        <dbReference type="SAM" id="MobiDB-lite"/>
    </source>
</evidence>
<accession>Q042I3</accession>